<gene>
    <name evidence="1" type="primary">NS</name>
</gene>
<comment type="function">
    <text evidence="1">Inhibits post-transcriptional processing of cellular pre-mRNA, by binding and inhibiting two cellular proteins that are required for the 3'-end processing of cellular pre-mRNAs: the 30 kDa cleavage and polyadenylation specificity factor/CPSF4 and the poly(A)-binding protein 2/PABPN1. In turn, unprocessed 3' end pre-mRNAs accumulate in the host nucleus and are no longer exported to the cytoplasm. Cellular protein synthesis is thereby shut off very early after virus infection. Viral protein synthesis is not affected by the inhibition of the cellular 3' end processing machinery because the poly(A) tails of viral mRNAs are produced by the viral polymerase through a stuttering mechanism. Prevents the establishment of the cellular antiviral state by inhibiting TRIM25-mediated RIGI ubiquitination, which normally triggers the antiviral transduction signal that leads to the activation of type I IFN genes by transcription factors IRF3 and IRF7. Also binds poly(A) and U6 snRNA. Inhibits the integrated stress response (ISR) in the infected cell by blocking dsRNA binding by EIF2AK2/PKR and further phosphorylation of EIF2S1/EIF-2ALPHA. Stress granule formation is thus inhibited, which allows protein synthesis and viral replication.</text>
</comment>
<comment type="subunit">
    <text evidence="1">Homodimer. Interacts with host TRIM25 (via coiled coil); this interaction specifically inhibits TRIM25 multimerization and TRIM25-mediated RIGI CARD ubiquitination. Interacts with human EIF2AK2/PKR, CPSF4, IVNS1ABP and PABPN1.</text>
</comment>
<comment type="subcellular location">
    <subcellularLocation>
        <location evidence="1">Host nucleus</location>
    </subcellularLocation>
    <subcellularLocation>
        <location evidence="1">Host cytoplasm</location>
    </subcellularLocation>
    <text evidence="1">In uninfected, transfected cells, NS1 is localized in the nucleus. Only in virus infected cells, the nuclear export signal is unveiled, presumably by a viral protein, and a fraction of NS1 is exported in the cytoplasm.</text>
</comment>
<comment type="alternative products">
    <event type="alternative splicing"/>
    <isoform>
        <id>P03500-1</id>
        <name>NS1</name>
        <sequence type="displayed"/>
    </isoform>
    <isoform>
        <id>P03509-1</id>
        <name>NEP</name>
        <name>NS2</name>
        <sequence type="external"/>
    </isoform>
</comment>
<comment type="domain">
    <text evidence="1">The dsRNA-binding region is required for suppression of RNA silencing.</text>
</comment>
<comment type="PTM">
    <text evidence="1">Upon interferon induction, ISGylated via host HERC5; this results in the impairment of NS1 interaction with RNA targets due to its inability to form homodimers and to interact with host EIF2AK2/PKR.</text>
</comment>
<comment type="similarity">
    <text evidence="1">Belongs to the influenza A viruses NS1 family.</text>
</comment>
<comment type="sequence caution">
    <conflict type="frameshift">
        <sequence resource="EMBL-CDS" id="AAA43115"/>
    </conflict>
</comment>
<accession>P03500</accession>
<accession>Q67030</accession>
<feature type="chain" id="PRO_0000078930" description="Non-structural protein 1">
    <location>
        <begin position="1"/>
        <end position="230"/>
    </location>
</feature>
<feature type="region of interest" description="RNA-binding and homodimerization" evidence="1">
    <location>
        <begin position="1"/>
        <end position="73"/>
    </location>
</feature>
<feature type="region of interest" description="CPSF4-binding" evidence="1">
    <location>
        <begin position="180"/>
        <end position="215"/>
    </location>
</feature>
<feature type="region of interest" description="Disordered" evidence="2">
    <location>
        <begin position="205"/>
        <end position="230"/>
    </location>
</feature>
<feature type="region of interest" description="PABPN1-binding" evidence="1">
    <location>
        <begin position="223"/>
        <end position="230"/>
    </location>
</feature>
<feature type="short sequence motif" description="Nuclear localization signal" evidence="1">
    <location>
        <begin position="34"/>
        <end position="38"/>
    </location>
</feature>
<feature type="short sequence motif" description="Nuclear export signal" evidence="1">
    <location>
        <begin position="137"/>
        <end position="146"/>
    </location>
</feature>
<feature type="sequence conflict" description="In Ref. 3; AAA43115." ref="3">
    <original>S</original>
    <variation>P</variation>
    <location>
        <position position="42"/>
    </location>
</feature>
<feature type="sequence conflict" description="In Ref. 4; AAA43139." ref="4">
    <original>D</original>
    <variation>E</variation>
    <location>
        <position position="71"/>
    </location>
</feature>
<feature type="sequence conflict" description="In Ref. 3; AAA43115 and 4; AAA43139." ref="3 4">
    <original>G</original>
    <variation>D</variation>
    <location>
        <position position="125"/>
    </location>
</feature>
<organism>
    <name type="scientific">Influenza A virus (strain A/Fowl plague virus/Rostock/8/1934 H7N1)</name>
    <dbReference type="NCBI Taxonomy" id="392810"/>
    <lineage>
        <taxon>Viruses</taxon>
        <taxon>Riboviria</taxon>
        <taxon>Orthornavirae</taxon>
        <taxon>Negarnaviricota</taxon>
        <taxon>Polyploviricotina</taxon>
        <taxon>Insthoviricetes</taxon>
        <taxon>Articulavirales</taxon>
        <taxon>Orthomyxoviridae</taxon>
        <taxon>Alphainfluenzavirus</taxon>
        <taxon>Alphainfluenzavirus influenzae</taxon>
        <taxon>Influenza A virus</taxon>
    </lineage>
</organism>
<keyword id="KW-0025">Alternative splicing</keyword>
<keyword id="KW-1262">Eukaryotic host gene expression shutoff by virus</keyword>
<keyword id="KW-1035">Host cytoplasm</keyword>
<keyword id="KW-1190">Host gene expression shutoff by virus</keyword>
<keyword id="KW-1192">Host mRNA suppression by virus</keyword>
<keyword id="KW-1048">Host nucleus</keyword>
<keyword id="KW-0945">Host-virus interaction</keyword>
<keyword id="KW-1090">Inhibition of host innate immune response by virus</keyword>
<keyword id="KW-1114">Inhibition of host interferon signaling pathway by virus</keyword>
<keyword id="KW-1102">Inhibition of host PKR by virus</keyword>
<keyword id="KW-1103">Inhibition of host pre-mRNA processing by virus</keyword>
<keyword id="KW-1088">Inhibition of host RIG-I by virus</keyword>
<keyword id="KW-1113">Inhibition of host RLR pathway by virus</keyword>
<keyword id="KW-0922">Interferon antiviral system evasion</keyword>
<keyword id="KW-0694">RNA-binding</keyword>
<keyword id="KW-0832">Ubl conjugation</keyword>
<keyword id="KW-0899">Viral immunoevasion</keyword>
<organismHost>
    <name type="scientific">Aves</name>
    <dbReference type="NCBI Taxonomy" id="8782"/>
</organismHost>
<evidence type="ECO:0000255" key="1">
    <source>
        <dbReference type="HAMAP-Rule" id="MF_04066"/>
    </source>
</evidence>
<evidence type="ECO:0000256" key="2">
    <source>
        <dbReference type="SAM" id="MobiDB-lite"/>
    </source>
</evidence>
<sequence length="230" mass="25923">MDSNTVSSFQVDCFLWHVRKRFADQEMGDAPFLDRLRRDQKSLRGRGSTLGLDIDTATRVGKQIVERILEDESDEALKMTIASVPATRYLTDMTLEEMSRDWFMLMPKQKVAGSLCIRMDQAIMGKNIILKANFSVIFDRLETLILLRALTDEGAIVGEISPLPSLPGHTDEDVKNAIGVLIGGLEWNDNTVRVSETIQRFAWRSSNENGGPPLPPKQKRKMARTIESEI</sequence>
<name>NS1_I34A0</name>
<proteinExistence type="inferred from homology"/>
<dbReference type="EMBL" id="V01100">
    <property type="protein sequence ID" value="CAA24284.1"/>
    <property type="molecule type" value="Genomic_RNA"/>
</dbReference>
<dbReference type="EMBL" id="V01101">
    <property type="protein sequence ID" value="CAA24286.1"/>
    <property type="molecule type" value="Genomic_RNA"/>
</dbReference>
<dbReference type="EMBL" id="M29617">
    <property type="protein sequence ID" value="AAA43115.1"/>
    <property type="status" value="ALT_FRAME"/>
    <property type="molecule type" value="Genomic_RNA"/>
</dbReference>
<dbReference type="EMBL" id="M60799">
    <property type="protein sequence ID" value="AAA43139.2"/>
    <property type="molecule type" value="Genomic_RNA"/>
</dbReference>
<dbReference type="SMR" id="P03500"/>
<dbReference type="GO" id="GO:0030430">
    <property type="term" value="C:host cell cytoplasm"/>
    <property type="evidence" value="ECO:0007669"/>
    <property type="project" value="UniProtKB-SubCell"/>
</dbReference>
<dbReference type="GO" id="GO:0042025">
    <property type="term" value="C:host cell nucleus"/>
    <property type="evidence" value="ECO:0007669"/>
    <property type="project" value="UniProtKB-SubCell"/>
</dbReference>
<dbReference type="GO" id="GO:0030291">
    <property type="term" value="F:protein serine/threonine kinase inhibitor activity"/>
    <property type="evidence" value="ECO:0007669"/>
    <property type="project" value="UniProtKB-KW"/>
</dbReference>
<dbReference type="GO" id="GO:0003723">
    <property type="term" value="F:RNA binding"/>
    <property type="evidence" value="ECO:0007669"/>
    <property type="project" value="UniProtKB-KW"/>
</dbReference>
<dbReference type="GO" id="GO:0039540">
    <property type="term" value="P:symbiont-mediated suppression of host cytoplasmic pattern recognition receptor signaling pathway via inhibition of RIG-I activity"/>
    <property type="evidence" value="ECO:0007669"/>
    <property type="project" value="UniProtKB-KW"/>
</dbReference>
<dbReference type="GO" id="GO:0039657">
    <property type="term" value="P:symbiont-mediated suppression of host gene expression"/>
    <property type="evidence" value="ECO:0007669"/>
    <property type="project" value="UniProtKB-KW"/>
</dbReference>
<dbReference type="GO" id="GO:0039524">
    <property type="term" value="P:symbiont-mediated suppression of host mRNA processing"/>
    <property type="evidence" value="ECO:0007669"/>
    <property type="project" value="UniProtKB-KW"/>
</dbReference>
<dbReference type="GO" id="GO:0039580">
    <property type="term" value="P:symbiont-mediated suppression of host PKR/eIFalpha signaling"/>
    <property type="evidence" value="ECO:0007669"/>
    <property type="project" value="UniProtKB-KW"/>
</dbReference>
<dbReference type="GO" id="GO:0039502">
    <property type="term" value="P:symbiont-mediated suppression of host type I interferon-mediated signaling pathway"/>
    <property type="evidence" value="ECO:0007669"/>
    <property type="project" value="UniProtKB-KW"/>
</dbReference>
<dbReference type="FunFam" id="1.10.287.10:FF:000001">
    <property type="entry name" value="Non-structural protein 1"/>
    <property type="match status" value="1"/>
</dbReference>
<dbReference type="FunFam" id="3.30.420.330:FF:000001">
    <property type="entry name" value="Non-structural protein 1"/>
    <property type="match status" value="1"/>
</dbReference>
<dbReference type="Gene3D" id="3.30.420.330">
    <property type="entry name" value="Influenza virus non-structural protein, effector domain"/>
    <property type="match status" value="1"/>
</dbReference>
<dbReference type="Gene3D" id="1.10.287.10">
    <property type="entry name" value="S15/NS1, RNA-binding"/>
    <property type="match status" value="1"/>
</dbReference>
<dbReference type="HAMAP" id="MF_04066">
    <property type="entry name" value="INFV_NS1"/>
    <property type="match status" value="1"/>
</dbReference>
<dbReference type="InterPro" id="IPR004208">
    <property type="entry name" value="NS1"/>
</dbReference>
<dbReference type="InterPro" id="IPR000256">
    <property type="entry name" value="NS1A"/>
</dbReference>
<dbReference type="InterPro" id="IPR038064">
    <property type="entry name" value="NS1A_effect_dom-like_sf"/>
</dbReference>
<dbReference type="InterPro" id="IPR009068">
    <property type="entry name" value="uS15_NS1_RNA-bd_sf"/>
</dbReference>
<dbReference type="Pfam" id="PF00600">
    <property type="entry name" value="Flu_NS1"/>
    <property type="match status" value="1"/>
</dbReference>
<dbReference type="SUPFAM" id="SSF143021">
    <property type="entry name" value="Ns1 effector domain-like"/>
    <property type="match status" value="1"/>
</dbReference>
<dbReference type="SUPFAM" id="SSF47060">
    <property type="entry name" value="S15/NS1 RNA-binding domain"/>
    <property type="match status" value="1"/>
</dbReference>
<protein>
    <recommendedName>
        <fullName evidence="1">Non-structural protein 1</fullName>
        <shortName evidence="1">NS1</shortName>
    </recommendedName>
    <alternativeName>
        <fullName evidence="1">NS1A</fullName>
    </alternativeName>
</protein>
<reference key="1">
    <citation type="journal article" date="1980" name="Proc. Natl. Acad. Sci. U.S.A.">
        <title>Nucleotide sequence of influenza virus RNA segment 8 indicates that coding regions for NS1 and NS2 proteins overlap.</title>
        <authorList>
            <person name="Porter A.G."/>
            <person name="Smith J.C."/>
            <person name="Emtage J.S."/>
        </authorList>
    </citation>
    <scope>NUCLEOTIDE SEQUENCE [GENOMIC RNA]</scope>
</reference>
<reference key="2">
    <citation type="journal article" date="1980" name="Cell">
        <title>Sequence of interrupted and uninterrupted mRNAs and cloned DNA coding for the two overlapping nonstructural proteins of influenza virus.</title>
        <authorList>
            <person name="Lamb R.A."/>
            <person name="Lai C.-J."/>
        </authorList>
    </citation>
    <scope>NUCLEOTIDE SEQUENCE [GENOMIC RNA]</scope>
</reference>
<reference key="3">
    <citation type="journal article" date="1985" name="J. Gen. Virol.">
        <title>A mutant of fowl plague virus (influenza A) with an enhanced electrophoretic mobility of RNA segment 8.</title>
        <authorList>
            <person name="Burger H."/>
            <person name="Steuler H."/>
            <person name="Scholtissek C."/>
        </authorList>
    </citation>
    <scope>NUCLEOTIDE SEQUENCE [GENOMIC RNA]</scope>
</reference>
<reference key="4">
    <citation type="journal article" date="1991" name="Virology">
        <title>Phylogenetic relationship of the nonstructural (NS) genes of influenza A viruses.</title>
        <authorList>
            <person name="Ludwig S."/>
            <person name="Schultz U."/>
            <person name="Mandler J."/>
            <person name="Fitch W.M."/>
            <person name="Scholtissek C."/>
        </authorList>
    </citation>
    <scope>NUCLEOTIDE SEQUENCE [GENOMIC RNA]</scope>
</reference>
<reference key="5">
    <citation type="journal article" date="2003" name="Virology">
        <title>Intracellular warfare between human influenza viruses and human cells: the roles of the viral NS1 protein.</title>
        <authorList>
            <person name="Krug R.M."/>
            <person name="Yuan W."/>
            <person name="Noah D.L."/>
            <person name="Latham A.G."/>
        </authorList>
    </citation>
    <scope>REVIEW</scope>
</reference>